<reference key="1">
    <citation type="journal article" date="2011" name="J. Bacteriol.">
        <title>Comparative genomics of 28 Salmonella enterica isolates: evidence for CRISPR-mediated adaptive sublineage evolution.</title>
        <authorList>
            <person name="Fricke W.F."/>
            <person name="Mammel M.K."/>
            <person name="McDermott P.F."/>
            <person name="Tartera C."/>
            <person name="White D.G."/>
            <person name="Leclerc J.E."/>
            <person name="Ravel J."/>
            <person name="Cebula T.A."/>
        </authorList>
    </citation>
    <scope>NUCLEOTIDE SEQUENCE [LARGE SCALE GENOMIC DNA]</scope>
    <source>
        <strain>CVM19633</strain>
    </source>
</reference>
<proteinExistence type="inferred from homology"/>
<dbReference type="EC" id="2.7.8.13" evidence="1"/>
<dbReference type="EMBL" id="CP001127">
    <property type="protein sequence ID" value="ACF90055.1"/>
    <property type="molecule type" value="Genomic_DNA"/>
</dbReference>
<dbReference type="RefSeq" id="WP_000964138.1">
    <property type="nucleotide sequence ID" value="NC_011094.1"/>
</dbReference>
<dbReference type="SMR" id="B4TXH5"/>
<dbReference type="KEGG" id="sew:SeSA_A0141"/>
<dbReference type="HOGENOM" id="CLU_023982_0_0_6"/>
<dbReference type="UniPathway" id="UPA00219"/>
<dbReference type="Proteomes" id="UP000001865">
    <property type="component" value="Chromosome"/>
</dbReference>
<dbReference type="GO" id="GO:0005886">
    <property type="term" value="C:plasma membrane"/>
    <property type="evidence" value="ECO:0007669"/>
    <property type="project" value="UniProtKB-SubCell"/>
</dbReference>
<dbReference type="GO" id="GO:0046872">
    <property type="term" value="F:metal ion binding"/>
    <property type="evidence" value="ECO:0007669"/>
    <property type="project" value="UniProtKB-KW"/>
</dbReference>
<dbReference type="GO" id="GO:0008963">
    <property type="term" value="F:phospho-N-acetylmuramoyl-pentapeptide-transferase activity"/>
    <property type="evidence" value="ECO:0007669"/>
    <property type="project" value="UniProtKB-UniRule"/>
</dbReference>
<dbReference type="GO" id="GO:0051992">
    <property type="term" value="F:UDP-N-acetylmuramoyl-L-alanyl-D-glutamyl-meso-2,6-diaminopimelyl-D-alanyl-D-alanine:undecaprenyl-phosphate transferase activity"/>
    <property type="evidence" value="ECO:0007669"/>
    <property type="project" value="RHEA"/>
</dbReference>
<dbReference type="GO" id="GO:0051301">
    <property type="term" value="P:cell division"/>
    <property type="evidence" value="ECO:0007669"/>
    <property type="project" value="UniProtKB-KW"/>
</dbReference>
<dbReference type="GO" id="GO:0071555">
    <property type="term" value="P:cell wall organization"/>
    <property type="evidence" value="ECO:0007669"/>
    <property type="project" value="UniProtKB-KW"/>
</dbReference>
<dbReference type="GO" id="GO:0009252">
    <property type="term" value="P:peptidoglycan biosynthetic process"/>
    <property type="evidence" value="ECO:0007669"/>
    <property type="project" value="UniProtKB-UniRule"/>
</dbReference>
<dbReference type="GO" id="GO:0008360">
    <property type="term" value="P:regulation of cell shape"/>
    <property type="evidence" value="ECO:0007669"/>
    <property type="project" value="UniProtKB-KW"/>
</dbReference>
<dbReference type="CDD" id="cd06852">
    <property type="entry name" value="GT_MraY"/>
    <property type="match status" value="1"/>
</dbReference>
<dbReference type="HAMAP" id="MF_00038">
    <property type="entry name" value="MraY"/>
    <property type="match status" value="1"/>
</dbReference>
<dbReference type="InterPro" id="IPR000715">
    <property type="entry name" value="Glycosyl_transferase_4"/>
</dbReference>
<dbReference type="InterPro" id="IPR003524">
    <property type="entry name" value="PNAcMuramoyl-5peptid_Trfase"/>
</dbReference>
<dbReference type="InterPro" id="IPR018480">
    <property type="entry name" value="PNAcMuramoyl-5peptid_Trfase_CS"/>
</dbReference>
<dbReference type="NCBIfam" id="TIGR00445">
    <property type="entry name" value="mraY"/>
    <property type="match status" value="1"/>
</dbReference>
<dbReference type="PANTHER" id="PTHR22926">
    <property type="entry name" value="PHOSPHO-N-ACETYLMURAMOYL-PENTAPEPTIDE-TRANSFERASE"/>
    <property type="match status" value="1"/>
</dbReference>
<dbReference type="PANTHER" id="PTHR22926:SF5">
    <property type="entry name" value="PHOSPHO-N-ACETYLMURAMOYL-PENTAPEPTIDE-TRANSFERASE HOMOLOG"/>
    <property type="match status" value="1"/>
</dbReference>
<dbReference type="Pfam" id="PF00953">
    <property type="entry name" value="Glycos_transf_4"/>
    <property type="match status" value="1"/>
</dbReference>
<dbReference type="Pfam" id="PF10555">
    <property type="entry name" value="MraY_sig1"/>
    <property type="match status" value="1"/>
</dbReference>
<dbReference type="PROSITE" id="PS01347">
    <property type="entry name" value="MRAY_1"/>
    <property type="match status" value="1"/>
</dbReference>
<dbReference type="PROSITE" id="PS01348">
    <property type="entry name" value="MRAY_2"/>
    <property type="match status" value="1"/>
</dbReference>
<accession>B4TXH5</accession>
<organism>
    <name type="scientific">Salmonella schwarzengrund (strain CVM19633)</name>
    <dbReference type="NCBI Taxonomy" id="439843"/>
    <lineage>
        <taxon>Bacteria</taxon>
        <taxon>Pseudomonadati</taxon>
        <taxon>Pseudomonadota</taxon>
        <taxon>Gammaproteobacteria</taxon>
        <taxon>Enterobacterales</taxon>
        <taxon>Enterobacteriaceae</taxon>
        <taxon>Salmonella</taxon>
    </lineage>
</organism>
<evidence type="ECO:0000255" key="1">
    <source>
        <dbReference type="HAMAP-Rule" id="MF_00038"/>
    </source>
</evidence>
<protein>
    <recommendedName>
        <fullName evidence="1">Phospho-N-acetylmuramoyl-pentapeptide-transferase</fullName>
        <ecNumber evidence="1">2.7.8.13</ecNumber>
    </recommendedName>
    <alternativeName>
        <fullName evidence="1">UDP-MurNAc-pentapeptide phosphotransferase</fullName>
    </alternativeName>
</protein>
<keyword id="KW-0131">Cell cycle</keyword>
<keyword id="KW-0132">Cell division</keyword>
<keyword id="KW-0997">Cell inner membrane</keyword>
<keyword id="KW-1003">Cell membrane</keyword>
<keyword id="KW-0133">Cell shape</keyword>
<keyword id="KW-0961">Cell wall biogenesis/degradation</keyword>
<keyword id="KW-0460">Magnesium</keyword>
<keyword id="KW-0472">Membrane</keyword>
<keyword id="KW-0479">Metal-binding</keyword>
<keyword id="KW-0573">Peptidoglycan synthesis</keyword>
<keyword id="KW-0808">Transferase</keyword>
<keyword id="KW-0812">Transmembrane</keyword>
<keyword id="KW-1133">Transmembrane helix</keyword>
<sequence>MLVWLAEHLVKYYSGFNVFSYLTFRAIVSLLTALFISLWMGPRMIARLQKLSFGQVVRNDGPESHFSKRGTPTMGGIMILTAIVISVLLWAYPSNPYVWCVLVVLIGYGIIGFVDDYRKVVRKDTKGLIARWKYFWMSVIALGVAFALYLVGKDTPATQLVVPFFKDVMPQLGLFYILLSYFVIVGTGNAVNLTDGLDGLAIMPTVFVAAGFALVAWATGNMNFANYLHIPYLRHAGELVIVCTAIVGAGLGFLWFNTYPAQVFMGDVGSLALGGALGIIAVLLRQEFLLVIMGGVFVVETLSVILQVGSFKLRGQRIFRMAPIHHHYELKGWPEPRVIVRFWIISLMLVLIGLATLKVR</sequence>
<feature type="chain" id="PRO_1000090671" description="Phospho-N-acetylmuramoyl-pentapeptide-transferase">
    <location>
        <begin position="1"/>
        <end position="360"/>
    </location>
</feature>
<feature type="topological domain" description="Periplasmic" evidence="1">
    <location>
        <begin position="1"/>
        <end position="25"/>
    </location>
</feature>
<feature type="transmembrane region" description="Helical" evidence="1">
    <location>
        <begin position="26"/>
        <end position="46"/>
    </location>
</feature>
<feature type="topological domain" description="Cytoplasmic" evidence="1">
    <location>
        <begin position="47"/>
        <end position="71"/>
    </location>
</feature>
<feature type="transmembrane region" description="Helical" evidence="1">
    <location>
        <begin position="72"/>
        <end position="92"/>
    </location>
</feature>
<feature type="topological domain" description="Periplasmic" evidence="1">
    <location>
        <position position="93"/>
    </location>
</feature>
<feature type="transmembrane region" description="Helical" evidence="1">
    <location>
        <begin position="94"/>
        <end position="114"/>
    </location>
</feature>
<feature type="topological domain" description="Cytoplasmic" evidence="1">
    <location>
        <begin position="115"/>
        <end position="131"/>
    </location>
</feature>
<feature type="transmembrane region" description="Helical" evidence="1">
    <location>
        <begin position="132"/>
        <end position="152"/>
    </location>
</feature>
<feature type="topological domain" description="Periplasmic" evidence="1">
    <location>
        <begin position="153"/>
        <end position="167"/>
    </location>
</feature>
<feature type="transmembrane region" description="Helical" evidence="1">
    <location>
        <begin position="168"/>
        <end position="188"/>
    </location>
</feature>
<feature type="topological domain" description="Cytoplasmic" evidence="1">
    <location>
        <begin position="189"/>
        <end position="198"/>
    </location>
</feature>
<feature type="transmembrane region" description="Helical" evidence="1">
    <location>
        <begin position="199"/>
        <end position="219"/>
    </location>
</feature>
<feature type="topological domain" description="Periplasmic" evidence="1">
    <location>
        <begin position="220"/>
        <end position="235"/>
    </location>
</feature>
<feature type="transmembrane region" description="Helical" evidence="1">
    <location>
        <begin position="236"/>
        <end position="256"/>
    </location>
</feature>
<feature type="topological domain" description="Cytoplasmic" evidence="1">
    <location>
        <begin position="257"/>
        <end position="262"/>
    </location>
</feature>
<feature type="transmembrane region" description="Helical" evidence="1">
    <location>
        <begin position="263"/>
        <end position="283"/>
    </location>
</feature>
<feature type="topological domain" description="Periplasmic" evidence="1">
    <location>
        <begin position="284"/>
        <end position="287"/>
    </location>
</feature>
<feature type="transmembrane region" description="Helical" evidence="1">
    <location>
        <begin position="288"/>
        <end position="308"/>
    </location>
</feature>
<feature type="topological domain" description="Cytoplasmic" evidence="1">
    <location>
        <begin position="309"/>
        <end position="337"/>
    </location>
</feature>
<feature type="transmembrane region" description="Helical" evidence="1">
    <location>
        <begin position="338"/>
        <end position="358"/>
    </location>
</feature>
<feature type="topological domain" description="Periplasmic" evidence="1">
    <location>
        <begin position="359"/>
        <end position="360"/>
    </location>
</feature>
<gene>
    <name evidence="1" type="primary">mraY</name>
    <name type="ordered locus">SeSA_A0141</name>
</gene>
<comment type="function">
    <text evidence="1">Catalyzes the initial step of the lipid cycle reactions in the biosynthesis of the cell wall peptidoglycan: transfers peptidoglycan precursor phospho-MurNAc-pentapeptide from UDP-MurNAc-pentapeptide onto the lipid carrier undecaprenyl phosphate, yielding undecaprenyl-pyrophosphoryl-MurNAc-pentapeptide, known as lipid I.</text>
</comment>
<comment type="catalytic activity">
    <reaction evidence="1">
        <text>UDP-N-acetyl-alpha-D-muramoyl-L-alanyl-gamma-D-glutamyl-meso-2,6-diaminopimeloyl-D-alanyl-D-alanine + di-trans,octa-cis-undecaprenyl phosphate = di-trans,octa-cis-undecaprenyl diphospho-N-acetyl-alpha-D-muramoyl-L-alanyl-D-glutamyl-meso-2,6-diaminopimeloyl-D-alanyl-D-alanine + UMP</text>
        <dbReference type="Rhea" id="RHEA:28386"/>
        <dbReference type="ChEBI" id="CHEBI:57865"/>
        <dbReference type="ChEBI" id="CHEBI:60392"/>
        <dbReference type="ChEBI" id="CHEBI:61386"/>
        <dbReference type="ChEBI" id="CHEBI:61387"/>
        <dbReference type="EC" id="2.7.8.13"/>
    </reaction>
</comment>
<comment type="cofactor">
    <cofactor evidence="1">
        <name>Mg(2+)</name>
        <dbReference type="ChEBI" id="CHEBI:18420"/>
    </cofactor>
</comment>
<comment type="pathway">
    <text evidence="1">Cell wall biogenesis; peptidoglycan biosynthesis.</text>
</comment>
<comment type="subcellular location">
    <subcellularLocation>
        <location evidence="1">Cell inner membrane</location>
        <topology evidence="1">Multi-pass membrane protein</topology>
    </subcellularLocation>
</comment>
<comment type="similarity">
    <text evidence="1">Belongs to the glycosyltransferase 4 family. MraY subfamily.</text>
</comment>
<name>MRAY_SALSV</name>